<keyword id="KW-1003">Cell membrane</keyword>
<keyword id="KW-0472">Membrane</keyword>
<keyword id="KW-1185">Reference proteome</keyword>
<keyword id="KW-0812">Transmembrane</keyword>
<keyword id="KW-1133">Transmembrane helix</keyword>
<gene>
    <name type="ordered locus">BQ2027_MB2742</name>
</gene>
<accession>P0A615</accession>
<accession>A0A1R3Y202</accession>
<accession>O33228</accession>
<accession>X2BM35</accession>
<reference key="1">
    <citation type="journal article" date="2003" name="Proc. Natl. Acad. Sci. U.S.A.">
        <title>The complete genome sequence of Mycobacterium bovis.</title>
        <authorList>
            <person name="Garnier T."/>
            <person name="Eiglmeier K."/>
            <person name="Camus J.-C."/>
            <person name="Medina N."/>
            <person name="Mansoor H."/>
            <person name="Pryor M."/>
            <person name="Duthoy S."/>
            <person name="Grondin S."/>
            <person name="Lacroix C."/>
            <person name="Monsempe C."/>
            <person name="Simon S."/>
            <person name="Harris B."/>
            <person name="Atkin R."/>
            <person name="Doggett J."/>
            <person name="Mayes R."/>
            <person name="Keating L."/>
            <person name="Wheeler P.R."/>
            <person name="Parkhill J."/>
            <person name="Barrell B.G."/>
            <person name="Cole S.T."/>
            <person name="Gordon S.V."/>
            <person name="Hewinson R.G."/>
        </authorList>
    </citation>
    <scope>NUCLEOTIDE SEQUENCE [LARGE SCALE GENOMIC DNA]</scope>
    <source>
        <strain>ATCC BAA-935 / AF2122/97</strain>
    </source>
</reference>
<reference key="2">
    <citation type="journal article" date="2017" name="Genome Announc.">
        <title>Updated reference genome sequence and annotation of Mycobacterium bovis AF2122/97.</title>
        <authorList>
            <person name="Malone K.M."/>
            <person name="Farrell D."/>
            <person name="Stuber T.P."/>
            <person name="Schubert O.T."/>
            <person name="Aebersold R."/>
            <person name="Robbe-Austerman S."/>
            <person name="Gordon S.V."/>
        </authorList>
    </citation>
    <scope>NUCLEOTIDE SEQUENCE [LARGE SCALE GENOMIC DNA]</scope>
    <scope>GENOME REANNOTATION</scope>
    <source>
        <strain>ATCC BAA-935 / AF2122/97</strain>
    </source>
</reference>
<comment type="subcellular location">
    <subcellularLocation>
        <location evidence="2">Cell membrane</location>
        <topology evidence="2">Multi-pass membrane protein</topology>
    </subcellularLocation>
</comment>
<comment type="similarity">
    <text evidence="2">Belongs to the TerC family.</text>
</comment>
<organism>
    <name type="scientific">Mycobacterium bovis (strain ATCC BAA-935 / AF2122/97)</name>
    <dbReference type="NCBI Taxonomy" id="233413"/>
    <lineage>
        <taxon>Bacteria</taxon>
        <taxon>Bacillati</taxon>
        <taxon>Actinomycetota</taxon>
        <taxon>Actinomycetes</taxon>
        <taxon>Mycobacteriales</taxon>
        <taxon>Mycobacteriaceae</taxon>
        <taxon>Mycobacterium</taxon>
        <taxon>Mycobacterium tuberculosis complex</taxon>
    </lineage>
</organism>
<evidence type="ECO:0000255" key="1"/>
<evidence type="ECO:0000305" key="2"/>
<dbReference type="EMBL" id="LT708304">
    <property type="protein sequence ID" value="SIU01360.1"/>
    <property type="molecule type" value="Genomic_DNA"/>
</dbReference>
<dbReference type="RefSeq" id="NP_856388.1">
    <property type="nucleotide sequence ID" value="NC_002945.3"/>
</dbReference>
<dbReference type="RefSeq" id="WP_003413979.1">
    <property type="nucleotide sequence ID" value="NC_002945.4"/>
</dbReference>
<dbReference type="KEGG" id="mbo:BQ2027_MB2742"/>
<dbReference type="PATRIC" id="fig|233413.5.peg.3004"/>
<dbReference type="Proteomes" id="UP000001419">
    <property type="component" value="Chromosome"/>
</dbReference>
<dbReference type="GO" id="GO:0005886">
    <property type="term" value="C:plasma membrane"/>
    <property type="evidence" value="ECO:0007669"/>
    <property type="project" value="UniProtKB-SubCell"/>
</dbReference>
<dbReference type="InterPro" id="IPR005496">
    <property type="entry name" value="Integral_membrane_TerC"/>
</dbReference>
<dbReference type="InterPro" id="IPR022369">
    <property type="entry name" value="Integral_membrane_TerC_rswitch"/>
</dbReference>
<dbReference type="NCBIfam" id="TIGR03718">
    <property type="entry name" value="R_switched_Alx"/>
    <property type="match status" value="1"/>
</dbReference>
<dbReference type="PANTHER" id="PTHR30238">
    <property type="entry name" value="MEMBRANE BOUND PREDICTED REDOX MODULATOR"/>
    <property type="match status" value="1"/>
</dbReference>
<dbReference type="PANTHER" id="PTHR30238:SF0">
    <property type="entry name" value="THYLAKOID MEMBRANE PROTEIN TERC, CHLOROPLASTIC"/>
    <property type="match status" value="1"/>
</dbReference>
<dbReference type="Pfam" id="PF03741">
    <property type="entry name" value="TerC"/>
    <property type="match status" value="1"/>
</dbReference>
<name>Y2742_MYCBO</name>
<feature type="chain" id="PRO_0000103420" description="Uncharacterized membrane protein Mb2742">
    <location>
        <begin position="1"/>
        <end position="397"/>
    </location>
</feature>
<feature type="transmembrane region" description="Helical" evidence="1">
    <location>
        <begin position="1"/>
        <end position="21"/>
    </location>
</feature>
<feature type="transmembrane region" description="Helical" evidence="1">
    <location>
        <begin position="39"/>
        <end position="59"/>
    </location>
</feature>
<feature type="transmembrane region" description="Helical" evidence="1">
    <location>
        <begin position="76"/>
        <end position="96"/>
    </location>
</feature>
<feature type="transmembrane region" description="Helical" evidence="1">
    <location>
        <begin position="103"/>
        <end position="123"/>
    </location>
</feature>
<feature type="transmembrane region" description="Helical" evidence="1">
    <location>
        <begin position="124"/>
        <end position="144"/>
    </location>
</feature>
<feature type="transmembrane region" description="Helical" evidence="1">
    <location>
        <begin position="194"/>
        <end position="214"/>
    </location>
</feature>
<feature type="transmembrane region" description="Helical" evidence="1">
    <location>
        <begin position="219"/>
        <end position="239"/>
    </location>
</feature>
<feature type="transmembrane region" description="Helical" evidence="1">
    <location>
        <begin position="255"/>
        <end position="275"/>
    </location>
</feature>
<feature type="transmembrane region" description="Helical" evidence="1">
    <location>
        <begin position="301"/>
        <end position="321"/>
    </location>
</feature>
<protein>
    <recommendedName>
        <fullName>Uncharacterized membrane protein Mb2742</fullName>
    </recommendedName>
</protein>
<sequence length="397" mass="43679">MGASGLVWTLTIVLIAGLMLVDYVLHVRKTHVPTLRQAVIQSATFVGIAILFGIAVVVFGGSELAVEYFACYLTDEALSVDNLFVFLVIISSFGVPRLAQQKVLLFGIAFALVTRTGFIFVGAALIENFNSAFYLFGLVLLVMAGNLARPTGLESRDAETLKRSVIIRLADRFLRTSQDYNGDRLFTVSNNKRMMTPLLLVMIAVGGTDILFAFDSIPALFGLTQNVYLVFAATAFSLLGLRQLYFLIDGLLDRLVYLSYGLAVILGFIGVKLMLEALHDNKIPFINGGKPVPTVEVSTTQSLTVIIIVLLITTAASFWSARGRAQNAMARARRYATAYLDLHYETESAERDKIFTALLAAERQINTLPTKYRMQPGQDDDLMTLLCRAHAARDAHM</sequence>
<proteinExistence type="inferred from homology"/>